<proteinExistence type="inferred from homology"/>
<reference key="1">
    <citation type="journal article" date="2010" name="PLoS ONE">
        <title>Genome sequence of Cronobacter sakazakii BAA-894 and comparative genomic hybridization analysis with other Cronobacter species.</title>
        <authorList>
            <person name="Kucerova E."/>
            <person name="Clifton S.W."/>
            <person name="Xia X.Q."/>
            <person name="Long F."/>
            <person name="Porwollik S."/>
            <person name="Fulton L."/>
            <person name="Fronick C."/>
            <person name="Minx P."/>
            <person name="Kyung K."/>
            <person name="Warren W."/>
            <person name="Fulton R."/>
            <person name="Feng D."/>
            <person name="Wollam A."/>
            <person name="Shah N."/>
            <person name="Bhonagiri V."/>
            <person name="Nash W.E."/>
            <person name="Hallsworth-Pepin K."/>
            <person name="Wilson R.K."/>
            <person name="McClelland M."/>
            <person name="Forsythe S.J."/>
        </authorList>
    </citation>
    <scope>NUCLEOTIDE SEQUENCE [LARGE SCALE GENOMIC DNA]</scope>
    <source>
        <strain>ATCC BAA-894</strain>
    </source>
</reference>
<feature type="chain" id="PRO_1000046797" description="Dual-action ribosomal maturation protein DarP">
    <location>
        <begin position="1"/>
        <end position="183"/>
    </location>
</feature>
<feature type="region of interest" description="Disordered" evidence="2">
    <location>
        <begin position="1"/>
        <end position="23"/>
    </location>
</feature>
<feature type="compositionally biased region" description="Acidic residues" evidence="2">
    <location>
        <begin position="7"/>
        <end position="23"/>
    </location>
</feature>
<sequence>MTKQPDDWLDEVPDNENDDDDDEIIWVSKSEIKRDAEELKRLGAELVDLGKNALDKIPLDDDLRAAIELAQRIKKEGRRRQMQLIGKMLRQRDDEPIRQALDKLKNRHNQQVALFHKLEQLRDRLIEEGDDAVPDVLNLWPQADRQQLRSLIRNAKKEKEGNKPPKSSRLIFQYLRELAESEQ</sequence>
<dbReference type="EMBL" id="CP000783">
    <property type="protein sequence ID" value="ABU75544.1"/>
    <property type="molecule type" value="Genomic_DNA"/>
</dbReference>
<dbReference type="SMR" id="A7MM35"/>
<dbReference type="KEGG" id="esa:ESA_00243"/>
<dbReference type="HOGENOM" id="CLU_106757_2_0_6"/>
<dbReference type="Proteomes" id="UP000000260">
    <property type="component" value="Chromosome"/>
</dbReference>
<dbReference type="GO" id="GO:0005829">
    <property type="term" value="C:cytosol"/>
    <property type="evidence" value="ECO:0007669"/>
    <property type="project" value="TreeGrafter"/>
</dbReference>
<dbReference type="GO" id="GO:0043022">
    <property type="term" value="F:ribosome binding"/>
    <property type="evidence" value="ECO:0007669"/>
    <property type="project" value="UniProtKB-UniRule"/>
</dbReference>
<dbReference type="GO" id="GO:0019843">
    <property type="term" value="F:rRNA binding"/>
    <property type="evidence" value="ECO:0007669"/>
    <property type="project" value="UniProtKB-UniRule"/>
</dbReference>
<dbReference type="GO" id="GO:1902626">
    <property type="term" value="P:assembly of large subunit precursor of preribosome"/>
    <property type="evidence" value="ECO:0007669"/>
    <property type="project" value="UniProtKB-UniRule"/>
</dbReference>
<dbReference type="CDD" id="cd16331">
    <property type="entry name" value="YjgA-like"/>
    <property type="match status" value="1"/>
</dbReference>
<dbReference type="FunFam" id="1.10.60.30:FF:000001">
    <property type="entry name" value="UPF0307 protein YjgA"/>
    <property type="match status" value="1"/>
</dbReference>
<dbReference type="FunFam" id="1.10.60.30:FF:000002">
    <property type="entry name" value="UPF0307 protein YjgA"/>
    <property type="match status" value="1"/>
</dbReference>
<dbReference type="Gene3D" id="1.10.60.30">
    <property type="entry name" value="PSPTO4464-like domains"/>
    <property type="match status" value="2"/>
</dbReference>
<dbReference type="HAMAP" id="MF_00765">
    <property type="entry name" value="DarP"/>
    <property type="match status" value="1"/>
</dbReference>
<dbReference type="InterPro" id="IPR006839">
    <property type="entry name" value="DarP"/>
</dbReference>
<dbReference type="InterPro" id="IPR023153">
    <property type="entry name" value="DarP_sf"/>
</dbReference>
<dbReference type="NCBIfam" id="NF003593">
    <property type="entry name" value="PRK05255.1-1"/>
    <property type="match status" value="1"/>
</dbReference>
<dbReference type="PANTHER" id="PTHR38101">
    <property type="entry name" value="UPF0307 PROTEIN YJGA"/>
    <property type="match status" value="1"/>
</dbReference>
<dbReference type="PANTHER" id="PTHR38101:SF1">
    <property type="entry name" value="UPF0307 PROTEIN YJGA"/>
    <property type="match status" value="1"/>
</dbReference>
<dbReference type="Pfam" id="PF04751">
    <property type="entry name" value="DarP"/>
    <property type="match status" value="1"/>
</dbReference>
<dbReference type="PIRSF" id="PIRSF016183">
    <property type="entry name" value="UCP016183"/>
    <property type="match status" value="1"/>
</dbReference>
<dbReference type="SUPFAM" id="SSF158710">
    <property type="entry name" value="PSPTO4464-like"/>
    <property type="match status" value="1"/>
</dbReference>
<gene>
    <name evidence="1" type="primary">darP</name>
    <name type="ordered locus">ESA_00243</name>
</gene>
<organism>
    <name type="scientific">Cronobacter sakazakii (strain ATCC BAA-894)</name>
    <name type="common">Enterobacter sakazakii</name>
    <dbReference type="NCBI Taxonomy" id="290339"/>
    <lineage>
        <taxon>Bacteria</taxon>
        <taxon>Pseudomonadati</taxon>
        <taxon>Pseudomonadota</taxon>
        <taxon>Gammaproteobacteria</taxon>
        <taxon>Enterobacterales</taxon>
        <taxon>Enterobacteriaceae</taxon>
        <taxon>Cronobacter</taxon>
    </lineage>
</organism>
<protein>
    <recommendedName>
        <fullName evidence="1">Dual-action ribosomal maturation protein DarP</fullName>
    </recommendedName>
    <alternativeName>
        <fullName evidence="1">Large ribosomal subunit assembly factor DarP</fullName>
    </alternativeName>
</protein>
<accession>A7MM35</accession>
<name>DARP_CROS8</name>
<comment type="function">
    <text evidence="1">Member of a network of 50S ribosomal subunit biogenesis factors which assembles along the 30S-50S interface, preventing incorrect 23S rRNA structures from forming. Promotes peptidyl transferase center (PTC) maturation.</text>
</comment>
<comment type="subcellular location">
    <subcellularLocation>
        <location evidence="1">Cytoplasm</location>
    </subcellularLocation>
    <text evidence="1">Associates with late stage pre-50S ribosomal subunits.</text>
</comment>
<comment type="similarity">
    <text evidence="1">Belongs to the DarP family.</text>
</comment>
<keyword id="KW-0963">Cytoplasm</keyword>
<keyword id="KW-1185">Reference proteome</keyword>
<keyword id="KW-0690">Ribosome biogenesis</keyword>
<keyword id="KW-0694">RNA-binding</keyword>
<keyword id="KW-0699">rRNA-binding</keyword>
<evidence type="ECO:0000255" key="1">
    <source>
        <dbReference type="HAMAP-Rule" id="MF_00765"/>
    </source>
</evidence>
<evidence type="ECO:0000256" key="2">
    <source>
        <dbReference type="SAM" id="MobiDB-lite"/>
    </source>
</evidence>